<accession>Q1I7Z4</accession>
<proteinExistence type="inferred from homology"/>
<protein>
    <recommendedName>
        <fullName evidence="1">NADH-quinone oxidoreductase subunit H</fullName>
        <ecNumber evidence="1">7.1.1.-</ecNumber>
    </recommendedName>
    <alternativeName>
        <fullName evidence="1">NADH dehydrogenase I subunit H</fullName>
    </alternativeName>
    <alternativeName>
        <fullName evidence="1">NDH-1 subunit H</fullName>
    </alternativeName>
</protein>
<comment type="function">
    <text evidence="1">NDH-1 shuttles electrons from NADH, via FMN and iron-sulfur (Fe-S) centers, to quinones in the respiratory chain. The immediate electron acceptor for the enzyme in this species is believed to be ubiquinone. Couples the redox reaction to proton translocation (for every two electrons transferred, four hydrogen ions are translocated across the cytoplasmic membrane), and thus conserves the redox energy in a proton gradient. This subunit may bind ubiquinone.</text>
</comment>
<comment type="catalytic activity">
    <reaction evidence="1">
        <text>a quinone + NADH + 5 H(+)(in) = a quinol + NAD(+) + 4 H(+)(out)</text>
        <dbReference type="Rhea" id="RHEA:57888"/>
        <dbReference type="ChEBI" id="CHEBI:15378"/>
        <dbReference type="ChEBI" id="CHEBI:24646"/>
        <dbReference type="ChEBI" id="CHEBI:57540"/>
        <dbReference type="ChEBI" id="CHEBI:57945"/>
        <dbReference type="ChEBI" id="CHEBI:132124"/>
    </reaction>
</comment>
<comment type="subunit">
    <text evidence="1">NDH-1 is composed of 13 different subunits. Subunits NuoA, H, J, K, L, M, N constitute the membrane sector of the complex.</text>
</comment>
<comment type="subcellular location">
    <subcellularLocation>
        <location evidence="1">Cell inner membrane</location>
        <topology evidence="1">Multi-pass membrane protein</topology>
    </subcellularLocation>
</comment>
<comment type="similarity">
    <text evidence="1">Belongs to the complex I subunit 1 family.</text>
</comment>
<dbReference type="EC" id="7.1.1.-" evidence="1"/>
<dbReference type="EMBL" id="CT573326">
    <property type="protein sequence ID" value="CAK16234.1"/>
    <property type="molecule type" value="Genomic_DNA"/>
</dbReference>
<dbReference type="RefSeq" id="WP_011534619.1">
    <property type="nucleotide sequence ID" value="NC_008027.1"/>
</dbReference>
<dbReference type="SMR" id="Q1I7Z4"/>
<dbReference type="STRING" id="384676.PSEEN3490"/>
<dbReference type="GeneID" id="32806564"/>
<dbReference type="KEGG" id="pen:PSEEN3490"/>
<dbReference type="eggNOG" id="COG1005">
    <property type="taxonomic scope" value="Bacteria"/>
</dbReference>
<dbReference type="HOGENOM" id="CLU_015134_0_1_6"/>
<dbReference type="OrthoDB" id="9803734at2"/>
<dbReference type="Proteomes" id="UP000000658">
    <property type="component" value="Chromosome"/>
</dbReference>
<dbReference type="GO" id="GO:0005886">
    <property type="term" value="C:plasma membrane"/>
    <property type="evidence" value="ECO:0007669"/>
    <property type="project" value="UniProtKB-SubCell"/>
</dbReference>
<dbReference type="GO" id="GO:0003954">
    <property type="term" value="F:NADH dehydrogenase activity"/>
    <property type="evidence" value="ECO:0007669"/>
    <property type="project" value="TreeGrafter"/>
</dbReference>
<dbReference type="GO" id="GO:0016655">
    <property type="term" value="F:oxidoreductase activity, acting on NAD(P)H, quinone or similar compound as acceptor"/>
    <property type="evidence" value="ECO:0007669"/>
    <property type="project" value="UniProtKB-UniRule"/>
</dbReference>
<dbReference type="GO" id="GO:0048038">
    <property type="term" value="F:quinone binding"/>
    <property type="evidence" value="ECO:0007669"/>
    <property type="project" value="UniProtKB-KW"/>
</dbReference>
<dbReference type="GO" id="GO:0009060">
    <property type="term" value="P:aerobic respiration"/>
    <property type="evidence" value="ECO:0007669"/>
    <property type="project" value="TreeGrafter"/>
</dbReference>
<dbReference type="HAMAP" id="MF_01350">
    <property type="entry name" value="NDH1_NuoH"/>
    <property type="match status" value="1"/>
</dbReference>
<dbReference type="InterPro" id="IPR001694">
    <property type="entry name" value="NADH_UbQ_OxRdtase_su1/FPO"/>
</dbReference>
<dbReference type="InterPro" id="IPR018086">
    <property type="entry name" value="NADH_UbQ_OxRdtase_su1_CS"/>
</dbReference>
<dbReference type="NCBIfam" id="NF004740">
    <property type="entry name" value="PRK06076.1-1"/>
    <property type="match status" value="1"/>
</dbReference>
<dbReference type="NCBIfam" id="NF004741">
    <property type="entry name" value="PRK06076.1-2"/>
    <property type="match status" value="1"/>
</dbReference>
<dbReference type="PANTHER" id="PTHR11432">
    <property type="entry name" value="NADH DEHYDROGENASE SUBUNIT 1"/>
    <property type="match status" value="1"/>
</dbReference>
<dbReference type="PANTHER" id="PTHR11432:SF3">
    <property type="entry name" value="NADH-UBIQUINONE OXIDOREDUCTASE CHAIN 1"/>
    <property type="match status" value="1"/>
</dbReference>
<dbReference type="Pfam" id="PF00146">
    <property type="entry name" value="NADHdh"/>
    <property type="match status" value="1"/>
</dbReference>
<dbReference type="PROSITE" id="PS00667">
    <property type="entry name" value="COMPLEX1_ND1_1"/>
    <property type="match status" value="1"/>
</dbReference>
<dbReference type="PROSITE" id="PS00668">
    <property type="entry name" value="COMPLEX1_ND1_2"/>
    <property type="match status" value="1"/>
</dbReference>
<name>NUOH_PSEE4</name>
<keyword id="KW-0997">Cell inner membrane</keyword>
<keyword id="KW-1003">Cell membrane</keyword>
<keyword id="KW-0472">Membrane</keyword>
<keyword id="KW-0520">NAD</keyword>
<keyword id="KW-0874">Quinone</keyword>
<keyword id="KW-1278">Translocase</keyword>
<keyword id="KW-0812">Transmembrane</keyword>
<keyword id="KW-1133">Transmembrane helix</keyword>
<keyword id="KW-0830">Ubiquinone</keyword>
<feature type="chain" id="PRO_0000298843" description="NADH-quinone oxidoreductase subunit H">
    <location>
        <begin position="1"/>
        <end position="335"/>
    </location>
</feature>
<feature type="transmembrane region" description="Helical" evidence="1">
    <location>
        <begin position="11"/>
        <end position="31"/>
    </location>
</feature>
<feature type="transmembrane region" description="Helical" evidence="1">
    <location>
        <begin position="81"/>
        <end position="101"/>
    </location>
</feature>
<feature type="transmembrane region" description="Helical" evidence="1">
    <location>
        <begin position="114"/>
        <end position="134"/>
    </location>
</feature>
<feature type="transmembrane region" description="Helical" evidence="1">
    <location>
        <begin position="154"/>
        <end position="174"/>
    </location>
</feature>
<feature type="transmembrane region" description="Helical" evidence="1">
    <location>
        <begin position="187"/>
        <end position="207"/>
    </location>
</feature>
<feature type="transmembrane region" description="Helical" evidence="1">
    <location>
        <begin position="238"/>
        <end position="258"/>
    </location>
</feature>
<feature type="transmembrane region" description="Helical" evidence="1">
    <location>
        <begin position="270"/>
        <end position="290"/>
    </location>
</feature>
<feature type="transmembrane region" description="Helical" evidence="1">
    <location>
        <begin position="307"/>
        <end position="327"/>
    </location>
</feature>
<organism>
    <name type="scientific">Pseudomonas entomophila (strain L48)</name>
    <dbReference type="NCBI Taxonomy" id="384676"/>
    <lineage>
        <taxon>Bacteria</taxon>
        <taxon>Pseudomonadati</taxon>
        <taxon>Pseudomonadota</taxon>
        <taxon>Gammaproteobacteria</taxon>
        <taxon>Pseudomonadales</taxon>
        <taxon>Pseudomonadaceae</taxon>
        <taxon>Pseudomonas</taxon>
    </lineage>
</organism>
<reference key="1">
    <citation type="journal article" date="2006" name="Nat. Biotechnol.">
        <title>Complete genome sequence of the entomopathogenic and metabolically versatile soil bacterium Pseudomonas entomophila.</title>
        <authorList>
            <person name="Vodovar N."/>
            <person name="Vallenet D."/>
            <person name="Cruveiller S."/>
            <person name="Rouy Z."/>
            <person name="Barbe V."/>
            <person name="Acosta C."/>
            <person name="Cattolico L."/>
            <person name="Jubin C."/>
            <person name="Lajus A."/>
            <person name="Segurens B."/>
            <person name="Vacherie B."/>
            <person name="Wincker P."/>
            <person name="Weissenbach J."/>
            <person name="Lemaitre B."/>
            <person name="Medigue C."/>
            <person name="Boccard F."/>
        </authorList>
    </citation>
    <scope>NUCLEOTIDE SEQUENCE [LARGE SCALE GENOMIC DNA]</scope>
    <source>
        <strain>L48</strain>
    </source>
</reference>
<gene>
    <name evidence="1" type="primary">nuoH</name>
    <name type="ordered locus">PSEEN3490</name>
</gene>
<evidence type="ECO:0000255" key="1">
    <source>
        <dbReference type="HAMAP-Rule" id="MF_01350"/>
    </source>
</evidence>
<sequence>MSWFTPEVIDVILTVVRAIVVLLAVVVCGALLSFVERRLLGWWQDRYGPNRVGPFGMFQIAADMLKMFFKEDWNPPFVDRMIFTLAPVVAMSALLIAFVVIPITPLWGVADLNIGLLFFFAMAGLSVYAVLFAGWSSNNKYALLGSLRASAQTVSYEVFLGLALMGVVVQVGSFNMRDIVEYQANNLWFIIPQFFGFCTFFIAGVAVTHRHPFDQPEAEQELADGYHIEYAGMKWGMFFVGEYIGIILISALLVTLFFGGWHGPFGILPQVPFLWFALKTAFFIMLFILLRASIPRPRYDQVMDFSWKFCLPLTLINLLVTAAVVLYNTPAVAAQ</sequence>